<evidence type="ECO:0000255" key="1">
    <source>
        <dbReference type="HAMAP-Rule" id="MF_00022"/>
    </source>
</evidence>
<organism>
    <name type="scientific">Rhodospirillum centenum (strain ATCC 51521 / SW)</name>
    <dbReference type="NCBI Taxonomy" id="414684"/>
    <lineage>
        <taxon>Bacteria</taxon>
        <taxon>Pseudomonadati</taxon>
        <taxon>Pseudomonadota</taxon>
        <taxon>Alphaproteobacteria</taxon>
        <taxon>Rhodospirillales</taxon>
        <taxon>Rhodospirillaceae</taxon>
        <taxon>Rhodospirillum</taxon>
    </lineage>
</organism>
<comment type="function">
    <text evidence="1">Catalyzes the attachment of glutamate to tRNA(Glu) in a two-step reaction: glutamate is first activated by ATP to form Glu-AMP and then transferred to the acceptor end of tRNA(Glu).</text>
</comment>
<comment type="catalytic activity">
    <reaction evidence="1">
        <text>tRNA(Glu) + L-glutamate + ATP = L-glutamyl-tRNA(Glu) + AMP + diphosphate</text>
        <dbReference type="Rhea" id="RHEA:23540"/>
        <dbReference type="Rhea" id="RHEA-COMP:9663"/>
        <dbReference type="Rhea" id="RHEA-COMP:9680"/>
        <dbReference type="ChEBI" id="CHEBI:29985"/>
        <dbReference type="ChEBI" id="CHEBI:30616"/>
        <dbReference type="ChEBI" id="CHEBI:33019"/>
        <dbReference type="ChEBI" id="CHEBI:78442"/>
        <dbReference type="ChEBI" id="CHEBI:78520"/>
        <dbReference type="ChEBI" id="CHEBI:456215"/>
        <dbReference type="EC" id="6.1.1.17"/>
    </reaction>
</comment>
<comment type="subunit">
    <text evidence="1">Monomer.</text>
</comment>
<comment type="subcellular location">
    <subcellularLocation>
        <location evidence="1">Cytoplasm</location>
    </subcellularLocation>
</comment>
<comment type="similarity">
    <text evidence="1">Belongs to the class-I aminoacyl-tRNA synthetase family. Glutamate--tRNA ligase type 1 subfamily.</text>
</comment>
<keyword id="KW-0030">Aminoacyl-tRNA synthetase</keyword>
<keyword id="KW-0067">ATP-binding</keyword>
<keyword id="KW-0963">Cytoplasm</keyword>
<keyword id="KW-0436">Ligase</keyword>
<keyword id="KW-0547">Nucleotide-binding</keyword>
<keyword id="KW-0648">Protein biosynthesis</keyword>
<keyword id="KW-1185">Reference proteome</keyword>
<feature type="chain" id="PRO_0000367750" description="Glutamate--tRNA ligase 2">
    <location>
        <begin position="1"/>
        <end position="468"/>
    </location>
</feature>
<feature type="short sequence motif" description="'HIGH' region" evidence="1">
    <location>
        <begin position="9"/>
        <end position="19"/>
    </location>
</feature>
<feature type="short sequence motif" description="'KMSKS' region" evidence="1">
    <location>
        <begin position="238"/>
        <end position="242"/>
    </location>
</feature>
<feature type="binding site" evidence="1">
    <location>
        <position position="241"/>
    </location>
    <ligand>
        <name>ATP</name>
        <dbReference type="ChEBI" id="CHEBI:30616"/>
    </ligand>
</feature>
<name>SYE2_RHOCS</name>
<sequence length="468" mass="52030">MTIVTRFAPSPTGFLHIGGARTALFNWLYARGHGGKFLLRIEDTDRARSTQAAVDAILDGLDWLGLEWDGDPISQFERKDRHAEVAHEMLRRGMAYRCYASPEELEAMKEEQRRQGLPMRYDGRWRDRDPSEAPAGVNPVIRLKAPQEGETVVRDHVQGEVRVQNAQLDDMILLRSDGTPTYLLAVVVDDYDMGVTHVVRGDDHLTNTFRQLQIYAAMGWTPPEYAHVPLIHGPDGAKLSKRHGALGVDAYRDMGYLPETMRNYLLRLGWSHGDDEIISTDQAKAWFNLDDIGRSPSRLDFAKLDNLNGHYIRQSDDARLVSLVVPMVEKRLGRPLTGSEHARLLAAMPGFKPRVKTLVELADGCLFLFALRPLAMDDKAAALLTPEAKAQLGELHALFSGLGDWTGGALEQAVRDFAERTGLKLGKVAQPLRAALTGSTVSPPIFEVAEVLGRTETLERIDDARKAG</sequence>
<proteinExistence type="inferred from homology"/>
<gene>
    <name evidence="1" type="primary">gltX2</name>
    <name type="ordered locus">RC1_1191</name>
</gene>
<dbReference type="EC" id="6.1.1.17" evidence="1"/>
<dbReference type="EMBL" id="CP000613">
    <property type="protein sequence ID" value="ACI98605.1"/>
    <property type="molecule type" value="Genomic_DNA"/>
</dbReference>
<dbReference type="RefSeq" id="WP_012566393.1">
    <property type="nucleotide sequence ID" value="NC_011420.2"/>
</dbReference>
<dbReference type="SMR" id="B6IST4"/>
<dbReference type="STRING" id="414684.RC1_1191"/>
<dbReference type="KEGG" id="rce:RC1_1191"/>
<dbReference type="eggNOG" id="COG0008">
    <property type="taxonomic scope" value="Bacteria"/>
</dbReference>
<dbReference type="HOGENOM" id="CLU_015768_6_3_5"/>
<dbReference type="OrthoDB" id="9807503at2"/>
<dbReference type="Proteomes" id="UP000001591">
    <property type="component" value="Chromosome"/>
</dbReference>
<dbReference type="GO" id="GO:0005829">
    <property type="term" value="C:cytosol"/>
    <property type="evidence" value="ECO:0007669"/>
    <property type="project" value="TreeGrafter"/>
</dbReference>
<dbReference type="GO" id="GO:0005524">
    <property type="term" value="F:ATP binding"/>
    <property type="evidence" value="ECO:0007669"/>
    <property type="project" value="UniProtKB-UniRule"/>
</dbReference>
<dbReference type="GO" id="GO:0004818">
    <property type="term" value="F:glutamate-tRNA ligase activity"/>
    <property type="evidence" value="ECO:0007669"/>
    <property type="project" value="UniProtKB-UniRule"/>
</dbReference>
<dbReference type="GO" id="GO:0000049">
    <property type="term" value="F:tRNA binding"/>
    <property type="evidence" value="ECO:0007669"/>
    <property type="project" value="InterPro"/>
</dbReference>
<dbReference type="GO" id="GO:0008270">
    <property type="term" value="F:zinc ion binding"/>
    <property type="evidence" value="ECO:0007669"/>
    <property type="project" value="InterPro"/>
</dbReference>
<dbReference type="GO" id="GO:0006424">
    <property type="term" value="P:glutamyl-tRNA aminoacylation"/>
    <property type="evidence" value="ECO:0007669"/>
    <property type="project" value="UniProtKB-UniRule"/>
</dbReference>
<dbReference type="CDD" id="cd00808">
    <property type="entry name" value="GluRS_core"/>
    <property type="match status" value="1"/>
</dbReference>
<dbReference type="FunFam" id="3.40.50.620:FF:000007">
    <property type="entry name" value="Glutamate--tRNA ligase"/>
    <property type="match status" value="1"/>
</dbReference>
<dbReference type="Gene3D" id="1.10.10.350">
    <property type="match status" value="1"/>
</dbReference>
<dbReference type="Gene3D" id="3.40.50.620">
    <property type="entry name" value="HUPs"/>
    <property type="match status" value="1"/>
</dbReference>
<dbReference type="HAMAP" id="MF_00022">
    <property type="entry name" value="Glu_tRNA_synth_type1"/>
    <property type="match status" value="1"/>
</dbReference>
<dbReference type="InterPro" id="IPR045462">
    <property type="entry name" value="aa-tRNA-synth_I_cd-bd"/>
</dbReference>
<dbReference type="InterPro" id="IPR020751">
    <property type="entry name" value="aa-tRNA-synth_I_codon-bd_sub2"/>
</dbReference>
<dbReference type="InterPro" id="IPR001412">
    <property type="entry name" value="aa-tRNA-synth_I_CS"/>
</dbReference>
<dbReference type="InterPro" id="IPR008925">
    <property type="entry name" value="aa_tRNA-synth_I_cd-bd_sf"/>
</dbReference>
<dbReference type="InterPro" id="IPR004527">
    <property type="entry name" value="Glu-tRNA-ligase_bac/mito"/>
</dbReference>
<dbReference type="InterPro" id="IPR000924">
    <property type="entry name" value="Glu/Gln-tRNA-synth"/>
</dbReference>
<dbReference type="InterPro" id="IPR020058">
    <property type="entry name" value="Glu/Gln-tRNA-synth_Ib_cat-dom"/>
</dbReference>
<dbReference type="InterPro" id="IPR049940">
    <property type="entry name" value="GluQ/Sye"/>
</dbReference>
<dbReference type="InterPro" id="IPR033910">
    <property type="entry name" value="GluRS_core"/>
</dbReference>
<dbReference type="InterPro" id="IPR014729">
    <property type="entry name" value="Rossmann-like_a/b/a_fold"/>
</dbReference>
<dbReference type="NCBIfam" id="TIGR00464">
    <property type="entry name" value="gltX_bact"/>
    <property type="match status" value="1"/>
</dbReference>
<dbReference type="PANTHER" id="PTHR43311">
    <property type="entry name" value="GLUTAMATE--TRNA LIGASE"/>
    <property type="match status" value="1"/>
</dbReference>
<dbReference type="PANTHER" id="PTHR43311:SF2">
    <property type="entry name" value="GLUTAMATE--TRNA LIGASE, MITOCHONDRIAL-RELATED"/>
    <property type="match status" value="1"/>
</dbReference>
<dbReference type="Pfam" id="PF19269">
    <property type="entry name" value="Anticodon_2"/>
    <property type="match status" value="1"/>
</dbReference>
<dbReference type="Pfam" id="PF00749">
    <property type="entry name" value="tRNA-synt_1c"/>
    <property type="match status" value="1"/>
</dbReference>
<dbReference type="PRINTS" id="PR00987">
    <property type="entry name" value="TRNASYNTHGLU"/>
</dbReference>
<dbReference type="SUPFAM" id="SSF48163">
    <property type="entry name" value="An anticodon-binding domain of class I aminoacyl-tRNA synthetases"/>
    <property type="match status" value="1"/>
</dbReference>
<dbReference type="SUPFAM" id="SSF52374">
    <property type="entry name" value="Nucleotidylyl transferase"/>
    <property type="match status" value="1"/>
</dbReference>
<dbReference type="PROSITE" id="PS00178">
    <property type="entry name" value="AA_TRNA_LIGASE_I"/>
    <property type="match status" value="1"/>
</dbReference>
<accession>B6IST4</accession>
<reference key="1">
    <citation type="submission" date="2007-03" db="EMBL/GenBank/DDBJ databases">
        <title>Genome sequence of Rhodospirillum centenum.</title>
        <authorList>
            <person name="Touchman J.W."/>
            <person name="Bauer C."/>
            <person name="Blankenship R.E."/>
        </authorList>
    </citation>
    <scope>NUCLEOTIDE SEQUENCE [LARGE SCALE GENOMIC DNA]</scope>
    <source>
        <strain>ATCC 51521 / SW</strain>
    </source>
</reference>
<protein>
    <recommendedName>
        <fullName evidence="1">Glutamate--tRNA ligase 2</fullName>
        <ecNumber evidence="1">6.1.1.17</ecNumber>
    </recommendedName>
    <alternativeName>
        <fullName evidence="1">Glutamyl-tRNA synthetase 2</fullName>
        <shortName evidence="1">GluRS 2</shortName>
    </alternativeName>
</protein>